<accession>Q1LKJ7</accession>
<sequence length="367" mass="40152">MDLSIPNPVADATHQAGGNPGGQPLEIDALIVGAGPVGLFQVFELGLLEIKAHIIDSLKVVGGQCVELYPDKPIYDIPAVPICTGQELTDNLLKQIEPFSPTFHLGQEVSVVERREDGRFFVETSLGTRFITKTIFIAAGVGSFQPRTLKVEGIDKFEGKQLFYRVKDPSRFHGRNLVVVGGGDSALDWTLDLVGKAESVVMIHRRDGFRAAPASVAKMRELCEQMEMQFMVGQIGGYEEKDGVLTEIKVTGADGVTRRMPVDDILVFFGLSPKLGPIAEWGLDLERKQIKVDTEKFETNIPGIFAVGDINTYPGKKKLILSGFHEAALAAFGAAPYIFPDKKIHMQYTTTSPKLHKVLGVETPVFD</sequence>
<dbReference type="EC" id="1.18.1.2" evidence="1"/>
<dbReference type="EMBL" id="CP000352">
    <property type="protein sequence ID" value="ABF09329.1"/>
    <property type="molecule type" value="Genomic_DNA"/>
</dbReference>
<dbReference type="RefSeq" id="WP_008648409.1">
    <property type="nucleotide sequence ID" value="NC_007973.1"/>
</dbReference>
<dbReference type="SMR" id="Q1LKJ7"/>
<dbReference type="STRING" id="266264.Rmet_2452"/>
<dbReference type="KEGG" id="rme:Rmet_2452"/>
<dbReference type="eggNOG" id="COG0492">
    <property type="taxonomic scope" value="Bacteria"/>
</dbReference>
<dbReference type="HOGENOM" id="CLU_031864_5_5_4"/>
<dbReference type="Proteomes" id="UP000002429">
    <property type="component" value="Chromosome"/>
</dbReference>
<dbReference type="GO" id="GO:0004324">
    <property type="term" value="F:ferredoxin-NADP+ reductase activity"/>
    <property type="evidence" value="ECO:0007669"/>
    <property type="project" value="UniProtKB-UniRule"/>
</dbReference>
<dbReference type="GO" id="GO:0050660">
    <property type="term" value="F:flavin adenine dinucleotide binding"/>
    <property type="evidence" value="ECO:0007669"/>
    <property type="project" value="UniProtKB-UniRule"/>
</dbReference>
<dbReference type="GO" id="GO:0050661">
    <property type="term" value="F:NADP binding"/>
    <property type="evidence" value="ECO:0007669"/>
    <property type="project" value="UniProtKB-UniRule"/>
</dbReference>
<dbReference type="Gene3D" id="3.50.50.60">
    <property type="entry name" value="FAD/NAD(P)-binding domain"/>
    <property type="match status" value="2"/>
</dbReference>
<dbReference type="HAMAP" id="MF_01685">
    <property type="entry name" value="FENR2"/>
    <property type="match status" value="1"/>
</dbReference>
<dbReference type="InterPro" id="IPR036188">
    <property type="entry name" value="FAD/NAD-bd_sf"/>
</dbReference>
<dbReference type="InterPro" id="IPR023753">
    <property type="entry name" value="FAD/NAD-binding_dom"/>
</dbReference>
<dbReference type="InterPro" id="IPR022890">
    <property type="entry name" value="Fd--NADP_Rdtase_type_2"/>
</dbReference>
<dbReference type="InterPro" id="IPR050097">
    <property type="entry name" value="Ferredoxin-NADP_redctase_2"/>
</dbReference>
<dbReference type="PANTHER" id="PTHR48105">
    <property type="entry name" value="THIOREDOXIN REDUCTASE 1-RELATED-RELATED"/>
    <property type="match status" value="1"/>
</dbReference>
<dbReference type="Pfam" id="PF07992">
    <property type="entry name" value="Pyr_redox_2"/>
    <property type="match status" value="1"/>
</dbReference>
<dbReference type="PRINTS" id="PR00368">
    <property type="entry name" value="FADPNR"/>
</dbReference>
<dbReference type="PRINTS" id="PR00469">
    <property type="entry name" value="PNDRDTASEII"/>
</dbReference>
<dbReference type="SUPFAM" id="SSF51905">
    <property type="entry name" value="FAD/NAD(P)-binding domain"/>
    <property type="match status" value="2"/>
</dbReference>
<organism>
    <name type="scientific">Cupriavidus metallidurans (strain ATCC 43123 / DSM 2839 / NBRC 102507 / CH34)</name>
    <name type="common">Ralstonia metallidurans</name>
    <dbReference type="NCBI Taxonomy" id="266264"/>
    <lineage>
        <taxon>Bacteria</taxon>
        <taxon>Pseudomonadati</taxon>
        <taxon>Pseudomonadota</taxon>
        <taxon>Betaproteobacteria</taxon>
        <taxon>Burkholderiales</taxon>
        <taxon>Burkholderiaceae</taxon>
        <taxon>Cupriavidus</taxon>
    </lineage>
</organism>
<feature type="chain" id="PRO_0000364908" description="Ferredoxin--NADP reductase 2">
    <location>
        <begin position="1"/>
        <end position="367"/>
    </location>
</feature>
<feature type="binding site" evidence="1">
    <location>
        <position position="56"/>
    </location>
    <ligand>
        <name>FAD</name>
        <dbReference type="ChEBI" id="CHEBI:57692"/>
    </ligand>
</feature>
<feature type="binding site" evidence="1">
    <location>
        <position position="64"/>
    </location>
    <ligand>
        <name>FAD</name>
        <dbReference type="ChEBI" id="CHEBI:57692"/>
    </ligand>
</feature>
<feature type="binding site" evidence="1">
    <location>
        <position position="69"/>
    </location>
    <ligand>
        <name>FAD</name>
        <dbReference type="ChEBI" id="CHEBI:57692"/>
    </ligand>
</feature>
<feature type="binding site" evidence="1">
    <location>
        <position position="109"/>
    </location>
    <ligand>
        <name>FAD</name>
        <dbReference type="ChEBI" id="CHEBI:57692"/>
    </ligand>
</feature>
<feature type="binding site" evidence="1">
    <location>
        <position position="144"/>
    </location>
    <ligand>
        <name>FAD</name>
        <dbReference type="ChEBI" id="CHEBI:57692"/>
    </ligand>
</feature>
<feature type="binding site" evidence="1">
    <location>
        <position position="309"/>
    </location>
    <ligand>
        <name>FAD</name>
        <dbReference type="ChEBI" id="CHEBI:57692"/>
    </ligand>
</feature>
<feature type="binding site" evidence="1">
    <location>
        <position position="350"/>
    </location>
    <ligand>
        <name>FAD</name>
        <dbReference type="ChEBI" id="CHEBI:57692"/>
    </ligand>
</feature>
<keyword id="KW-0274">FAD</keyword>
<keyword id="KW-0285">Flavoprotein</keyword>
<keyword id="KW-0521">NADP</keyword>
<keyword id="KW-0560">Oxidoreductase</keyword>
<keyword id="KW-1185">Reference proteome</keyword>
<proteinExistence type="inferred from homology"/>
<comment type="catalytic activity">
    <reaction evidence="1">
        <text>2 reduced [2Fe-2S]-[ferredoxin] + NADP(+) + H(+) = 2 oxidized [2Fe-2S]-[ferredoxin] + NADPH</text>
        <dbReference type="Rhea" id="RHEA:20125"/>
        <dbReference type="Rhea" id="RHEA-COMP:10000"/>
        <dbReference type="Rhea" id="RHEA-COMP:10001"/>
        <dbReference type="ChEBI" id="CHEBI:15378"/>
        <dbReference type="ChEBI" id="CHEBI:33737"/>
        <dbReference type="ChEBI" id="CHEBI:33738"/>
        <dbReference type="ChEBI" id="CHEBI:57783"/>
        <dbReference type="ChEBI" id="CHEBI:58349"/>
        <dbReference type="EC" id="1.18.1.2"/>
    </reaction>
</comment>
<comment type="cofactor">
    <cofactor evidence="1">
        <name>FAD</name>
        <dbReference type="ChEBI" id="CHEBI:57692"/>
    </cofactor>
    <text evidence="1">Binds 1 FAD per subunit.</text>
</comment>
<comment type="subunit">
    <text evidence="1">Homodimer.</text>
</comment>
<comment type="similarity">
    <text evidence="1">Belongs to the ferredoxin--NADP reductase type 2 family.</text>
</comment>
<evidence type="ECO:0000255" key="1">
    <source>
        <dbReference type="HAMAP-Rule" id="MF_01685"/>
    </source>
</evidence>
<gene>
    <name type="ordered locus">Rmet_2452</name>
</gene>
<reference key="1">
    <citation type="journal article" date="2010" name="PLoS ONE">
        <title>The complete genome sequence of Cupriavidus metallidurans strain CH34, a master survivalist in harsh and anthropogenic environments.</title>
        <authorList>
            <person name="Janssen P.J."/>
            <person name="Van Houdt R."/>
            <person name="Moors H."/>
            <person name="Monsieurs P."/>
            <person name="Morin N."/>
            <person name="Michaux A."/>
            <person name="Benotmane M.A."/>
            <person name="Leys N."/>
            <person name="Vallaeys T."/>
            <person name="Lapidus A."/>
            <person name="Monchy S."/>
            <person name="Medigue C."/>
            <person name="Taghavi S."/>
            <person name="McCorkle S."/>
            <person name="Dunn J."/>
            <person name="van der Lelie D."/>
            <person name="Mergeay M."/>
        </authorList>
    </citation>
    <scope>NUCLEOTIDE SEQUENCE [LARGE SCALE GENOMIC DNA]</scope>
    <source>
        <strain>ATCC 43123 / DSM 2839 / NBRC 102507 / CH34</strain>
    </source>
</reference>
<protein>
    <recommendedName>
        <fullName evidence="1">Ferredoxin--NADP reductase 2</fullName>
        <shortName evidence="1">FNR 2</shortName>
        <shortName evidence="1">Fd-NADP(+) reductase 2</shortName>
        <ecNumber evidence="1">1.18.1.2</ecNumber>
    </recommendedName>
</protein>
<name>FENR2_CUPMC</name>